<dbReference type="EMBL" id="CR382125">
    <property type="protein sequence ID" value="CAG99750.1"/>
    <property type="molecule type" value="Genomic_DNA"/>
</dbReference>
<dbReference type="RefSeq" id="XP_454663.1">
    <property type="nucleotide sequence ID" value="XM_454663.1"/>
</dbReference>
<dbReference type="FunCoup" id="Q6CN26">
    <property type="interactions" value="22"/>
</dbReference>
<dbReference type="STRING" id="284590.Q6CN26"/>
<dbReference type="GlyCosmos" id="Q6CN26">
    <property type="glycosylation" value="11 sites, No reported glycans"/>
</dbReference>
<dbReference type="PaxDb" id="284590-Q6CN26"/>
<dbReference type="KEGG" id="kla:KLLA0_E15819g"/>
<dbReference type="eggNOG" id="ENOG502QVFP">
    <property type="taxonomic scope" value="Eukaryota"/>
</dbReference>
<dbReference type="HOGENOM" id="CLU_033723_0_0_1"/>
<dbReference type="InParanoid" id="Q6CN26"/>
<dbReference type="OMA" id="WGTIDPQ"/>
<dbReference type="Proteomes" id="UP000000598">
    <property type="component" value="Chromosome E"/>
</dbReference>
<dbReference type="GO" id="GO:0016020">
    <property type="term" value="C:membrane"/>
    <property type="evidence" value="ECO:0007669"/>
    <property type="project" value="UniProtKB-SubCell"/>
</dbReference>
<dbReference type="InterPro" id="IPR051008">
    <property type="entry name" value="Telomere_Capping_Maintenance"/>
</dbReference>
<dbReference type="PANTHER" id="PTHR35518:SF2">
    <property type="entry name" value="MAINTENANCE OF TELOMERE CAPPING PROTEIN 6"/>
    <property type="match status" value="1"/>
</dbReference>
<dbReference type="PANTHER" id="PTHR35518">
    <property type="entry name" value="MAINTENANCE OF TELOMOERE CAPPING"/>
    <property type="match status" value="1"/>
</dbReference>
<dbReference type="Pfam" id="PF25506">
    <property type="entry name" value="TIM-barrel_MTC6"/>
    <property type="match status" value="1"/>
</dbReference>
<organism>
    <name type="scientific">Kluyveromyces lactis (strain ATCC 8585 / CBS 2359 / DSM 70799 / NBRC 1267 / NRRL Y-1140 / WM37)</name>
    <name type="common">Yeast</name>
    <name type="synonym">Candida sphaerica</name>
    <dbReference type="NCBI Taxonomy" id="284590"/>
    <lineage>
        <taxon>Eukaryota</taxon>
        <taxon>Fungi</taxon>
        <taxon>Dikarya</taxon>
        <taxon>Ascomycota</taxon>
        <taxon>Saccharomycotina</taxon>
        <taxon>Saccharomycetes</taxon>
        <taxon>Saccharomycetales</taxon>
        <taxon>Saccharomycetaceae</taxon>
        <taxon>Kluyveromyces</taxon>
    </lineage>
</organism>
<keyword id="KW-0325">Glycoprotein</keyword>
<keyword id="KW-0472">Membrane</keyword>
<keyword id="KW-1185">Reference proteome</keyword>
<keyword id="KW-0732">Signal</keyword>
<keyword id="KW-0812">Transmembrane</keyword>
<keyword id="KW-1133">Transmembrane helix</keyword>
<feature type="signal peptide" evidence="2">
    <location>
        <begin position="1"/>
        <end position="20"/>
    </location>
</feature>
<feature type="chain" id="PRO_0000407778" description="Maintenance of telomere capping protein 6">
    <location>
        <begin position="21"/>
        <end position="512"/>
    </location>
</feature>
<feature type="topological domain" description="Extracellular" evidence="2">
    <location>
        <begin position="21"/>
        <end position="460"/>
    </location>
</feature>
<feature type="transmembrane region" description="Helical" evidence="2">
    <location>
        <begin position="461"/>
        <end position="481"/>
    </location>
</feature>
<feature type="topological domain" description="Cytoplasmic" evidence="2">
    <location>
        <begin position="482"/>
        <end position="512"/>
    </location>
</feature>
<feature type="glycosylation site" description="N-linked (GlcNAc...) asparagine" evidence="2">
    <location>
        <position position="43"/>
    </location>
</feature>
<feature type="glycosylation site" description="N-linked (GlcNAc...) asparagine" evidence="2">
    <location>
        <position position="67"/>
    </location>
</feature>
<feature type="glycosylation site" description="N-linked (GlcNAc...) asparagine" evidence="2">
    <location>
        <position position="93"/>
    </location>
</feature>
<feature type="glycosylation site" description="N-linked (GlcNAc...) asparagine" evidence="2">
    <location>
        <position position="139"/>
    </location>
</feature>
<feature type="glycosylation site" description="N-linked (GlcNAc...) asparagine" evidence="2">
    <location>
        <position position="152"/>
    </location>
</feature>
<feature type="glycosylation site" description="N-linked (GlcNAc...) asparagine" evidence="2">
    <location>
        <position position="179"/>
    </location>
</feature>
<feature type="glycosylation site" description="N-linked (GlcNAc...) asparagine" evidence="2">
    <location>
        <position position="239"/>
    </location>
</feature>
<feature type="glycosylation site" description="N-linked (GlcNAc...) asparagine" evidence="2">
    <location>
        <position position="264"/>
    </location>
</feature>
<feature type="glycosylation site" description="N-linked (GlcNAc...) asparagine" evidence="2">
    <location>
        <position position="290"/>
    </location>
</feature>
<feature type="glycosylation site" description="N-linked (GlcNAc...) asparagine" evidence="2">
    <location>
        <position position="311"/>
    </location>
</feature>
<feature type="glycosylation site" description="N-linked (GlcNAc...) asparagine" evidence="2">
    <location>
        <position position="378"/>
    </location>
</feature>
<name>MTC6_KLULA</name>
<comment type="function">
    <text evidence="1">May be involved in telomere capping.</text>
</comment>
<comment type="subcellular location">
    <subcellularLocation>
        <location evidence="3">Membrane</location>
        <topology evidence="3">Single-pass type I membrane protein</topology>
    </subcellularLocation>
</comment>
<comment type="similarity">
    <text evidence="3">Belongs to the MTC6 family.</text>
</comment>
<evidence type="ECO:0000250" key="1"/>
<evidence type="ECO:0000255" key="2"/>
<evidence type="ECO:0000305" key="3"/>
<protein>
    <recommendedName>
        <fullName>Maintenance of telomere capping protein 6</fullName>
    </recommendedName>
</protein>
<reference key="1">
    <citation type="journal article" date="2004" name="Nature">
        <title>Genome evolution in yeasts.</title>
        <authorList>
            <person name="Dujon B."/>
            <person name="Sherman D."/>
            <person name="Fischer G."/>
            <person name="Durrens P."/>
            <person name="Casaregola S."/>
            <person name="Lafontaine I."/>
            <person name="de Montigny J."/>
            <person name="Marck C."/>
            <person name="Neuveglise C."/>
            <person name="Talla E."/>
            <person name="Goffard N."/>
            <person name="Frangeul L."/>
            <person name="Aigle M."/>
            <person name="Anthouard V."/>
            <person name="Babour A."/>
            <person name="Barbe V."/>
            <person name="Barnay S."/>
            <person name="Blanchin S."/>
            <person name="Beckerich J.-M."/>
            <person name="Beyne E."/>
            <person name="Bleykasten C."/>
            <person name="Boisrame A."/>
            <person name="Boyer J."/>
            <person name="Cattolico L."/>
            <person name="Confanioleri F."/>
            <person name="de Daruvar A."/>
            <person name="Despons L."/>
            <person name="Fabre E."/>
            <person name="Fairhead C."/>
            <person name="Ferry-Dumazet H."/>
            <person name="Groppi A."/>
            <person name="Hantraye F."/>
            <person name="Hennequin C."/>
            <person name="Jauniaux N."/>
            <person name="Joyet P."/>
            <person name="Kachouri R."/>
            <person name="Kerrest A."/>
            <person name="Koszul R."/>
            <person name="Lemaire M."/>
            <person name="Lesur I."/>
            <person name="Ma L."/>
            <person name="Muller H."/>
            <person name="Nicaud J.-M."/>
            <person name="Nikolski M."/>
            <person name="Oztas S."/>
            <person name="Ozier-Kalogeropoulos O."/>
            <person name="Pellenz S."/>
            <person name="Potier S."/>
            <person name="Richard G.-F."/>
            <person name="Straub M.-L."/>
            <person name="Suleau A."/>
            <person name="Swennen D."/>
            <person name="Tekaia F."/>
            <person name="Wesolowski-Louvel M."/>
            <person name="Westhof E."/>
            <person name="Wirth B."/>
            <person name="Zeniou-Meyer M."/>
            <person name="Zivanovic Y."/>
            <person name="Bolotin-Fukuhara M."/>
            <person name="Thierry A."/>
            <person name="Bouchier C."/>
            <person name="Caudron B."/>
            <person name="Scarpelli C."/>
            <person name="Gaillardin C."/>
            <person name="Weissenbach J."/>
            <person name="Wincker P."/>
            <person name="Souciet J.-L."/>
        </authorList>
    </citation>
    <scope>NUCLEOTIDE SEQUENCE [LARGE SCALE GENOMIC DNA]</scope>
    <source>
        <strain>ATCC 8585 / CBS 2359 / DSM 70799 / NBRC 1267 / NRRL Y-1140 / WM37</strain>
    </source>
</reference>
<accession>Q6CN26</accession>
<gene>
    <name type="primary">MTC6</name>
    <name type="ordered locus">KLLA0E15819g</name>
</gene>
<proteinExistence type="inferred from homology"/>
<sequence>MLLYFLVVAPLWMLSGLVRAEVWPSFSDEMIYAIRSQRDLMQNISIDQVPLPGLALKNSLPGSITSNETESLTTILSLLHHGIQSFRVDLTFNSSAGEWFLEGTNIRFVKMLNTVNLFVMATNTNLDANILTILLRFDNDTLRNSNAIKEANFTAILEEGLSPGYVYSIADLERDRELNQTLSINGYSDTGWVGLSRFLFDVKKRVVFGFLNGAELFSEDDQDNLVFPPETFHYVTANNITCPLNTVEDIMRVSQIQWRFLEGNFSYENYLHYLECGYSLILTNPIDTRNDSSQGTSLQRHLSSLLLWSWNATAPDDKLDESEDSDDSESSSTSQYVAYRCGAFSYNDYEDLDPFKIGNCYRNLPYLCRFSDRAYFWNISEDTGTYFESDDKDMCPTGYKFGVPRTPLQQRSLRIHLNDMDIDNLDFWIDINSISVSNCWITGGPYASCPYQKYGSRRNYIAMTVPTSAIALVLLLVIFYFNWVHVPIQDNRNNWKRIINAYSKEEVEGVPS</sequence>